<reference key="1">
    <citation type="submission" date="2006-06" db="EMBL/GenBank/DDBJ databases">
        <title>Complete sequence of Pseudoalteromonas atlantica T6c.</title>
        <authorList>
            <consortium name="US DOE Joint Genome Institute"/>
            <person name="Copeland A."/>
            <person name="Lucas S."/>
            <person name="Lapidus A."/>
            <person name="Barry K."/>
            <person name="Detter J.C."/>
            <person name="Glavina del Rio T."/>
            <person name="Hammon N."/>
            <person name="Israni S."/>
            <person name="Dalin E."/>
            <person name="Tice H."/>
            <person name="Pitluck S."/>
            <person name="Saunders E."/>
            <person name="Brettin T."/>
            <person name="Bruce D."/>
            <person name="Han C."/>
            <person name="Tapia R."/>
            <person name="Gilna P."/>
            <person name="Schmutz J."/>
            <person name="Larimer F."/>
            <person name="Land M."/>
            <person name="Hauser L."/>
            <person name="Kyrpides N."/>
            <person name="Kim E."/>
            <person name="Karls A.C."/>
            <person name="Bartlett D."/>
            <person name="Higgins B.P."/>
            <person name="Richardson P."/>
        </authorList>
    </citation>
    <scope>NUCLEOTIDE SEQUENCE [LARGE SCALE GENOMIC DNA]</scope>
    <source>
        <strain>T6c / ATCC BAA-1087</strain>
    </source>
</reference>
<protein>
    <recommendedName>
        <fullName evidence="1">Large ribosomal subunit protein uL15</fullName>
    </recommendedName>
    <alternativeName>
        <fullName evidence="3">50S ribosomal protein L15</fullName>
    </alternativeName>
</protein>
<keyword id="KW-0687">Ribonucleoprotein</keyword>
<keyword id="KW-0689">Ribosomal protein</keyword>
<keyword id="KW-0694">RNA-binding</keyword>
<keyword id="KW-0699">rRNA-binding</keyword>
<gene>
    <name evidence="1" type="primary">rplO</name>
    <name type="ordered locus">Patl_1008</name>
</gene>
<evidence type="ECO:0000255" key="1">
    <source>
        <dbReference type="HAMAP-Rule" id="MF_01341"/>
    </source>
</evidence>
<evidence type="ECO:0000256" key="2">
    <source>
        <dbReference type="SAM" id="MobiDB-lite"/>
    </source>
</evidence>
<evidence type="ECO:0000305" key="3"/>
<name>RL15_PSEA6</name>
<dbReference type="EMBL" id="CP000388">
    <property type="protein sequence ID" value="ABG39534.1"/>
    <property type="molecule type" value="Genomic_DNA"/>
</dbReference>
<dbReference type="RefSeq" id="WP_006990563.1">
    <property type="nucleotide sequence ID" value="NC_008228.1"/>
</dbReference>
<dbReference type="SMR" id="Q15X54"/>
<dbReference type="STRING" id="342610.Patl_1008"/>
<dbReference type="KEGG" id="pat:Patl_1008"/>
<dbReference type="eggNOG" id="COG0200">
    <property type="taxonomic scope" value="Bacteria"/>
</dbReference>
<dbReference type="HOGENOM" id="CLU_055188_4_2_6"/>
<dbReference type="OrthoDB" id="9810293at2"/>
<dbReference type="Proteomes" id="UP000001981">
    <property type="component" value="Chromosome"/>
</dbReference>
<dbReference type="GO" id="GO:0022625">
    <property type="term" value="C:cytosolic large ribosomal subunit"/>
    <property type="evidence" value="ECO:0007669"/>
    <property type="project" value="TreeGrafter"/>
</dbReference>
<dbReference type="GO" id="GO:0019843">
    <property type="term" value="F:rRNA binding"/>
    <property type="evidence" value="ECO:0007669"/>
    <property type="project" value="UniProtKB-UniRule"/>
</dbReference>
<dbReference type="GO" id="GO:0003735">
    <property type="term" value="F:structural constituent of ribosome"/>
    <property type="evidence" value="ECO:0007669"/>
    <property type="project" value="InterPro"/>
</dbReference>
<dbReference type="GO" id="GO:0006412">
    <property type="term" value="P:translation"/>
    <property type="evidence" value="ECO:0007669"/>
    <property type="project" value="UniProtKB-UniRule"/>
</dbReference>
<dbReference type="Gene3D" id="3.100.10.10">
    <property type="match status" value="1"/>
</dbReference>
<dbReference type="HAMAP" id="MF_01341">
    <property type="entry name" value="Ribosomal_uL15"/>
    <property type="match status" value="1"/>
</dbReference>
<dbReference type="InterPro" id="IPR030878">
    <property type="entry name" value="Ribosomal_uL15"/>
</dbReference>
<dbReference type="InterPro" id="IPR021131">
    <property type="entry name" value="Ribosomal_uL15/eL18"/>
</dbReference>
<dbReference type="InterPro" id="IPR036227">
    <property type="entry name" value="Ribosomal_uL15/eL18_sf"/>
</dbReference>
<dbReference type="InterPro" id="IPR005749">
    <property type="entry name" value="Ribosomal_uL15_bac-type"/>
</dbReference>
<dbReference type="NCBIfam" id="TIGR01071">
    <property type="entry name" value="rplO_bact"/>
    <property type="match status" value="1"/>
</dbReference>
<dbReference type="PANTHER" id="PTHR12934">
    <property type="entry name" value="50S RIBOSOMAL PROTEIN L15"/>
    <property type="match status" value="1"/>
</dbReference>
<dbReference type="PANTHER" id="PTHR12934:SF11">
    <property type="entry name" value="LARGE RIBOSOMAL SUBUNIT PROTEIN UL15M"/>
    <property type="match status" value="1"/>
</dbReference>
<dbReference type="Pfam" id="PF00828">
    <property type="entry name" value="Ribosomal_L27A"/>
    <property type="match status" value="1"/>
</dbReference>
<dbReference type="SUPFAM" id="SSF52080">
    <property type="entry name" value="Ribosomal proteins L15p and L18e"/>
    <property type="match status" value="1"/>
</dbReference>
<organism>
    <name type="scientific">Pseudoalteromonas atlantica (strain T6c / ATCC BAA-1087)</name>
    <dbReference type="NCBI Taxonomy" id="3042615"/>
    <lineage>
        <taxon>Bacteria</taxon>
        <taxon>Pseudomonadati</taxon>
        <taxon>Pseudomonadota</taxon>
        <taxon>Gammaproteobacteria</taxon>
        <taxon>Alteromonadales</taxon>
        <taxon>Alteromonadaceae</taxon>
        <taxon>Paraglaciecola</taxon>
    </lineage>
</organism>
<accession>Q15X54</accession>
<proteinExistence type="inferred from homology"/>
<comment type="function">
    <text evidence="1">Binds to the 23S rRNA.</text>
</comment>
<comment type="subunit">
    <text evidence="1">Part of the 50S ribosomal subunit.</text>
</comment>
<comment type="similarity">
    <text evidence="1">Belongs to the universal ribosomal protein uL15 family.</text>
</comment>
<feature type="chain" id="PRO_1000054516" description="Large ribosomal subunit protein uL15">
    <location>
        <begin position="1"/>
        <end position="144"/>
    </location>
</feature>
<feature type="region of interest" description="Disordered" evidence="2">
    <location>
        <begin position="1"/>
        <end position="59"/>
    </location>
</feature>
<feature type="compositionally biased region" description="Gly residues" evidence="2">
    <location>
        <begin position="21"/>
        <end position="31"/>
    </location>
</feature>
<sequence>MHLNTLAPAPGAKKSSKRVGRGMGSGLGKTGGRGHKGQKSRSGGSVKPGFEGGQMPIQRRLPKFGFTSRKSLVSDQVTLSEIAKVEGEVVSLETLKAAGLVKKEMLFVKVLKSGEISRAVTINGLKVTKGAREAIEAAGGKVEE</sequence>